<protein>
    <recommendedName>
        <fullName>Protein Iojap, chloroplastic</fullName>
    </recommendedName>
</protein>
<comment type="function">
    <text evidence="3 5">May be a ribosome silencing factor (Potential). Involved in plastid biogenesis. Plastids affected by a mutation in Iojap lose the ability to perform translation and lack plastid ribosomes.</text>
</comment>
<comment type="subunit">
    <text evidence="4">Interacts with chloroplast ribosomal protein uL14c (rpl14).</text>
</comment>
<comment type="subcellular location">
    <subcellularLocation>
        <location evidence="5">Plastid</location>
        <location evidence="5">Chloroplast</location>
    </subcellularLocation>
</comment>
<comment type="disruption phenotype">
    <text evidence="3">Plastids lose the ability to perform translation and lack plastid ribosomes.</text>
</comment>
<comment type="similarity">
    <text evidence="5">Belongs to the Iojap/RsfS family.</text>
</comment>
<organism>
    <name type="scientific">Zea mays</name>
    <name type="common">Maize</name>
    <dbReference type="NCBI Taxonomy" id="4577"/>
    <lineage>
        <taxon>Eukaryota</taxon>
        <taxon>Viridiplantae</taxon>
        <taxon>Streptophyta</taxon>
        <taxon>Embryophyta</taxon>
        <taxon>Tracheophyta</taxon>
        <taxon>Spermatophyta</taxon>
        <taxon>Magnoliopsida</taxon>
        <taxon>Liliopsida</taxon>
        <taxon>Poales</taxon>
        <taxon>Poaceae</taxon>
        <taxon>PACMAD clade</taxon>
        <taxon>Panicoideae</taxon>
        <taxon>Andropogonodae</taxon>
        <taxon>Andropogoneae</taxon>
        <taxon>Tripsacinae</taxon>
        <taxon>Zea</taxon>
    </lineage>
</organism>
<keyword id="KW-0150">Chloroplast</keyword>
<keyword id="KW-0934">Plastid</keyword>
<keyword id="KW-1185">Reference proteome</keyword>
<keyword id="KW-0809">Transit peptide</keyword>
<evidence type="ECO:0000255" key="1"/>
<evidence type="ECO:0000256" key="2">
    <source>
        <dbReference type="SAM" id="MobiDB-lite"/>
    </source>
</evidence>
<evidence type="ECO:0000269" key="3">
    <source>
    </source>
</evidence>
<evidence type="ECO:0000269" key="4">
    <source>
    </source>
</evidence>
<evidence type="ECO:0000305" key="5"/>
<proteinExistence type="evidence at protein level"/>
<accession>Q41822</accession>
<feature type="transit peptide" description="Chloroplast" evidence="1">
    <location>
        <begin position="1"/>
        <end position="62"/>
    </location>
</feature>
<feature type="chain" id="PRO_0000228110" description="Protein Iojap, chloroplastic">
    <location>
        <begin position="63"/>
        <end position="228"/>
    </location>
</feature>
<feature type="region of interest" description="Disordered" evidence="2">
    <location>
        <begin position="1"/>
        <end position="54"/>
    </location>
</feature>
<reference key="1">
    <citation type="journal article" date="1992" name="EMBO J.">
        <title>Molecular cloning and characterization of iojap (ij), a pattern striping gene of maize.</title>
        <authorList>
            <person name="Han C.D."/>
            <person name="Coe E.H. Jr."/>
            <person name="Martienssen R.A."/>
        </authorList>
    </citation>
    <scope>NUCLEOTIDE SEQUENCE [GENOMIC DNA / MRNA]</scope>
    <scope>FUNCTION</scope>
    <scope>DISRUPTION PHENOTYPE</scope>
    <source>
        <strain>cv. B73</strain>
        <tissue>Leaf</tissue>
    </source>
</reference>
<reference key="2">
    <citation type="journal article" date="1995" name="Maize Genet. Coop. Newslett.">
        <title>The Iojap (Ij) protein is associated with 50S chloroplast ribosomal subunits.</title>
        <authorList>
            <person name="Han C.D."/>
            <person name="Martienssen R.A."/>
        </authorList>
    </citation>
    <scope>POSSIBLE SUBCELLULAR LOCATION</scope>
    <scope>ASSOCIATION WITH CHLOROPLAST RIBOSOME LARGE SUBUNIT</scope>
</reference>
<reference key="3">
    <citation type="journal article" date="2012" name="PLoS Genet.">
        <title>RsfA (YbeB) proteins are conserved ribosomal silencing factors.</title>
        <authorList>
            <person name="Hauser R."/>
            <person name="Pech M."/>
            <person name="Kijek J."/>
            <person name="Yamamoto H."/>
            <person name="Titz B."/>
            <person name="Naeve F."/>
            <person name="Tovchigrechko A."/>
            <person name="Yamamoto K."/>
            <person name="Szaflarski W."/>
            <person name="Takeuchi N."/>
            <person name="Stellberger T."/>
            <person name="Diefenbacher M.E."/>
            <person name="Nierhaus K.H."/>
            <person name="Uetz P."/>
        </authorList>
    </citation>
    <scope>INTERACTION WITH CHLOROPLAST RIBOSOMAL PROTEIN UL14C (RPLN)</scope>
</reference>
<dbReference type="EMBL" id="Z15063">
    <property type="protein sequence ID" value="CAA78772.1"/>
    <property type="molecule type" value="mRNA"/>
</dbReference>
<dbReference type="EMBL" id="S47361">
    <property type="protein sequence ID" value="AAA11464.1"/>
    <property type="molecule type" value="Genomic_DNA"/>
</dbReference>
<dbReference type="PIR" id="S28019">
    <property type="entry name" value="S28019"/>
</dbReference>
<dbReference type="RefSeq" id="NP_001105495.1">
    <property type="nucleotide sequence ID" value="NM_001112025.1"/>
</dbReference>
<dbReference type="SMR" id="Q41822"/>
<dbReference type="FunCoup" id="Q41822">
    <property type="interactions" value="885"/>
</dbReference>
<dbReference type="STRING" id="4577.Q41822"/>
<dbReference type="PaxDb" id="4577-GRMZM2G004583_P01"/>
<dbReference type="GeneID" id="542470"/>
<dbReference type="KEGG" id="zma:542470"/>
<dbReference type="eggNOG" id="ENOG502RY19">
    <property type="taxonomic scope" value="Eukaryota"/>
</dbReference>
<dbReference type="HOGENOM" id="CLU_078387_2_0_1"/>
<dbReference type="InParanoid" id="Q41822"/>
<dbReference type="OrthoDB" id="21330at2759"/>
<dbReference type="Proteomes" id="UP000007305">
    <property type="component" value="Unplaced"/>
</dbReference>
<dbReference type="ExpressionAtlas" id="Q41822">
    <property type="expression patterns" value="baseline and differential"/>
</dbReference>
<dbReference type="GO" id="GO:0009507">
    <property type="term" value="C:chloroplast"/>
    <property type="evidence" value="ECO:0007669"/>
    <property type="project" value="UniProtKB-SubCell"/>
</dbReference>
<dbReference type="GO" id="GO:0043023">
    <property type="term" value="F:ribosomal large subunit binding"/>
    <property type="evidence" value="ECO:0000318"/>
    <property type="project" value="GO_Central"/>
</dbReference>
<dbReference type="GO" id="GO:0090071">
    <property type="term" value="P:negative regulation of ribosome biogenesis"/>
    <property type="evidence" value="ECO:0000318"/>
    <property type="project" value="GO_Central"/>
</dbReference>
<dbReference type="GO" id="GO:0017148">
    <property type="term" value="P:negative regulation of translation"/>
    <property type="evidence" value="ECO:0000318"/>
    <property type="project" value="GO_Central"/>
</dbReference>
<dbReference type="FunFam" id="3.30.460.10:FF:000026">
    <property type="entry name" value="Protein Iojap, chloroplastic"/>
    <property type="match status" value="1"/>
</dbReference>
<dbReference type="Gene3D" id="3.30.460.10">
    <property type="entry name" value="Beta Polymerase, domain 2"/>
    <property type="match status" value="1"/>
</dbReference>
<dbReference type="HAMAP" id="MF_01477">
    <property type="entry name" value="Iojap_RsfS"/>
    <property type="match status" value="1"/>
</dbReference>
<dbReference type="InterPro" id="IPR004394">
    <property type="entry name" value="Iojap/RsfS/C7orf30"/>
</dbReference>
<dbReference type="InterPro" id="IPR043519">
    <property type="entry name" value="NT_sf"/>
</dbReference>
<dbReference type="NCBIfam" id="TIGR00090">
    <property type="entry name" value="rsfS_iojap_ybeB"/>
    <property type="match status" value="1"/>
</dbReference>
<dbReference type="PANTHER" id="PTHR21043">
    <property type="entry name" value="IOJAP SUPERFAMILY ORTHOLOG"/>
    <property type="match status" value="1"/>
</dbReference>
<dbReference type="PANTHER" id="PTHR21043:SF2">
    <property type="entry name" value="PROTEIN IOJAP, CHLOROPLASTIC"/>
    <property type="match status" value="1"/>
</dbReference>
<dbReference type="Pfam" id="PF02410">
    <property type="entry name" value="RsfS"/>
    <property type="match status" value="1"/>
</dbReference>
<dbReference type="SUPFAM" id="SSF81301">
    <property type="entry name" value="Nucleotidyltransferase"/>
    <property type="match status" value="1"/>
</dbReference>
<name>IOJAP_MAIZE</name>
<sequence length="228" mass="24668">MGGTSAAVPSHGLACAPPAAVTLNPRARRRRASSGSGGHRSSPQQPLRSDLLPPATVACRARSQSASSSNVNFGRGDDADKLLEDLLKQHGEVVYSSGGPPDPTVEADDDAECLSFAVSLAKAASEIKATDIRVLCVRRLVYWTRFFIILTAFSNAQIDAISSKMRDIGEKQFSKVASGDTKPNSWTLLDFGDVVVHIFLPQQRAFYNLEEFYGNATPIELPFDTQRQ</sequence>
<gene>
    <name type="primary">Ij</name>
</gene>